<keyword id="KW-0066">ATP synthesis</keyword>
<keyword id="KW-0997">Cell inner membrane</keyword>
<keyword id="KW-1003">Cell membrane</keyword>
<keyword id="KW-0139">CF(1)</keyword>
<keyword id="KW-0375">Hydrogen ion transport</keyword>
<keyword id="KW-0406">Ion transport</keyword>
<keyword id="KW-0472">Membrane</keyword>
<keyword id="KW-0813">Transport</keyword>
<sequence>MASLKEVKGRIASVNNTRKITSAMKMVASAKLHKAQAAIENMLPYERRLNHILTNFLSADSEVESPFIVKREVKRVAIVVFASNTSLCGGFNANIIRHLTVILDEYKSLGMENVLLYPVGRKVAEGVKKLGFKAEGDFQHMADKPSYQEAAALAEDLMRRFLHRDIDKVELLYNHFRSTAVQVLTRETYLPIDLTQEKKEEDKGRIPDYIVEPSVDVVMGELLPKVLRMKMFTVLLDSNASEHAARTMAMQIATDNANDLLQDLTVMYNKSRQQAITNELLDIVGGSMA</sequence>
<dbReference type="EMBL" id="CP000139">
    <property type="protein sequence ID" value="ABR40639.1"/>
    <property type="molecule type" value="Genomic_DNA"/>
</dbReference>
<dbReference type="RefSeq" id="WP_005846837.1">
    <property type="nucleotide sequence ID" value="NZ_JANSWM010000059.1"/>
</dbReference>
<dbReference type="SMR" id="A6L4M5"/>
<dbReference type="STRING" id="435590.BVU_3001"/>
<dbReference type="PaxDb" id="435590-BVU_3001"/>
<dbReference type="GeneID" id="5303962"/>
<dbReference type="KEGG" id="bvu:BVU_3001"/>
<dbReference type="eggNOG" id="COG0224">
    <property type="taxonomic scope" value="Bacteria"/>
</dbReference>
<dbReference type="HOGENOM" id="CLU_050669_0_1_10"/>
<dbReference type="BioCyc" id="BVUL435590:G1G59-3124-MONOMER"/>
<dbReference type="Proteomes" id="UP000002861">
    <property type="component" value="Chromosome"/>
</dbReference>
<dbReference type="GO" id="GO:0005886">
    <property type="term" value="C:plasma membrane"/>
    <property type="evidence" value="ECO:0007669"/>
    <property type="project" value="UniProtKB-SubCell"/>
</dbReference>
<dbReference type="GO" id="GO:0045259">
    <property type="term" value="C:proton-transporting ATP synthase complex"/>
    <property type="evidence" value="ECO:0007669"/>
    <property type="project" value="UniProtKB-KW"/>
</dbReference>
<dbReference type="GO" id="GO:0005524">
    <property type="term" value="F:ATP binding"/>
    <property type="evidence" value="ECO:0007669"/>
    <property type="project" value="UniProtKB-UniRule"/>
</dbReference>
<dbReference type="GO" id="GO:0046933">
    <property type="term" value="F:proton-transporting ATP synthase activity, rotational mechanism"/>
    <property type="evidence" value="ECO:0007669"/>
    <property type="project" value="UniProtKB-UniRule"/>
</dbReference>
<dbReference type="GO" id="GO:0042777">
    <property type="term" value="P:proton motive force-driven plasma membrane ATP synthesis"/>
    <property type="evidence" value="ECO:0007669"/>
    <property type="project" value="UniProtKB-UniRule"/>
</dbReference>
<dbReference type="CDD" id="cd12151">
    <property type="entry name" value="F1-ATPase_gamma"/>
    <property type="match status" value="1"/>
</dbReference>
<dbReference type="Gene3D" id="3.40.1380.10">
    <property type="match status" value="1"/>
</dbReference>
<dbReference type="Gene3D" id="1.10.287.80">
    <property type="entry name" value="ATP synthase, gamma subunit, helix hairpin domain"/>
    <property type="match status" value="2"/>
</dbReference>
<dbReference type="HAMAP" id="MF_00815">
    <property type="entry name" value="ATP_synth_gamma_bact"/>
    <property type="match status" value="1"/>
</dbReference>
<dbReference type="InterPro" id="IPR035968">
    <property type="entry name" value="ATP_synth_F1_ATPase_gsu"/>
</dbReference>
<dbReference type="InterPro" id="IPR000131">
    <property type="entry name" value="ATP_synth_F1_gsu"/>
</dbReference>
<dbReference type="NCBIfam" id="TIGR01146">
    <property type="entry name" value="ATPsyn_F1gamma"/>
    <property type="match status" value="1"/>
</dbReference>
<dbReference type="NCBIfam" id="NF009959">
    <property type="entry name" value="PRK13426.1"/>
    <property type="match status" value="1"/>
</dbReference>
<dbReference type="PANTHER" id="PTHR11693">
    <property type="entry name" value="ATP SYNTHASE GAMMA CHAIN"/>
    <property type="match status" value="1"/>
</dbReference>
<dbReference type="PANTHER" id="PTHR11693:SF22">
    <property type="entry name" value="ATP SYNTHASE SUBUNIT GAMMA, MITOCHONDRIAL"/>
    <property type="match status" value="1"/>
</dbReference>
<dbReference type="Pfam" id="PF00231">
    <property type="entry name" value="ATP-synt"/>
    <property type="match status" value="1"/>
</dbReference>
<dbReference type="PRINTS" id="PR00126">
    <property type="entry name" value="ATPASEGAMMA"/>
</dbReference>
<dbReference type="SUPFAM" id="SSF52943">
    <property type="entry name" value="ATP synthase (F1-ATPase), gamma subunit"/>
    <property type="match status" value="1"/>
</dbReference>
<reference key="1">
    <citation type="journal article" date="2007" name="PLoS Biol.">
        <title>Evolution of symbiotic bacteria in the distal human intestine.</title>
        <authorList>
            <person name="Xu J."/>
            <person name="Mahowald M.A."/>
            <person name="Ley R.E."/>
            <person name="Lozupone C.A."/>
            <person name="Hamady M."/>
            <person name="Martens E.C."/>
            <person name="Henrissat B."/>
            <person name="Coutinho P.M."/>
            <person name="Minx P."/>
            <person name="Latreille P."/>
            <person name="Cordum H."/>
            <person name="Van Brunt A."/>
            <person name="Kim K."/>
            <person name="Fulton R.S."/>
            <person name="Fulton L.A."/>
            <person name="Clifton S.W."/>
            <person name="Wilson R.K."/>
            <person name="Knight R.D."/>
            <person name="Gordon J.I."/>
        </authorList>
    </citation>
    <scope>NUCLEOTIDE SEQUENCE [LARGE SCALE GENOMIC DNA]</scope>
    <source>
        <strain>ATCC 8482 / DSM 1447 / JCM 5826 / CCUG 4940 / NBRC 14291 / NCTC 11154</strain>
    </source>
</reference>
<protein>
    <recommendedName>
        <fullName evidence="1">ATP synthase gamma chain</fullName>
    </recommendedName>
    <alternativeName>
        <fullName evidence="1">ATP synthase F1 sector gamma subunit</fullName>
    </alternativeName>
    <alternativeName>
        <fullName evidence="1">F-ATPase gamma subunit</fullName>
    </alternativeName>
</protein>
<organism>
    <name type="scientific">Phocaeicola vulgatus (strain ATCC 8482 / DSM 1447 / JCM 5826 / CCUG 4940 / NBRC 14291 / NCTC 11154)</name>
    <name type="common">Bacteroides vulgatus</name>
    <dbReference type="NCBI Taxonomy" id="435590"/>
    <lineage>
        <taxon>Bacteria</taxon>
        <taxon>Pseudomonadati</taxon>
        <taxon>Bacteroidota</taxon>
        <taxon>Bacteroidia</taxon>
        <taxon>Bacteroidales</taxon>
        <taxon>Bacteroidaceae</taxon>
        <taxon>Phocaeicola</taxon>
    </lineage>
</organism>
<accession>A6L4M5</accession>
<proteinExistence type="inferred from homology"/>
<evidence type="ECO:0000255" key="1">
    <source>
        <dbReference type="HAMAP-Rule" id="MF_00815"/>
    </source>
</evidence>
<comment type="function">
    <text evidence="1">Produces ATP from ADP in the presence of a proton gradient across the membrane. The gamma chain is believed to be important in regulating ATPase activity and the flow of protons through the CF(0) complex.</text>
</comment>
<comment type="subunit">
    <text evidence="1">F-type ATPases have 2 components, CF(1) - the catalytic core - and CF(0) - the membrane proton channel. CF(1) has five subunits: alpha(3), beta(3), gamma(1), delta(1), epsilon(1). CF(0) has three main subunits: a, b and c.</text>
</comment>
<comment type="subcellular location">
    <subcellularLocation>
        <location evidence="1">Cell inner membrane</location>
        <topology evidence="1">Peripheral membrane protein</topology>
    </subcellularLocation>
</comment>
<comment type="similarity">
    <text evidence="1">Belongs to the ATPase gamma chain family.</text>
</comment>
<gene>
    <name evidence="1" type="primary">atpG</name>
    <name type="ordered locus">BVU_3001</name>
</gene>
<name>ATPG_PHOV8</name>
<feature type="chain" id="PRO_1000053159" description="ATP synthase gamma chain">
    <location>
        <begin position="1"/>
        <end position="289"/>
    </location>
</feature>